<protein>
    <recommendedName>
        <fullName evidence="1">Translation initiation factor 1A</fullName>
        <shortName evidence="1">aIF-1A</shortName>
    </recommendedName>
</protein>
<proteinExistence type="inferred from homology"/>
<name>IF1A_THEVO</name>
<comment type="function">
    <text evidence="1">Seems to be required for maximal rate of protein biosynthesis. Enhances ribosome dissociation into subunits and stabilizes the binding of the initiator Met-tRNA(I) to 40 S ribosomal subunits.</text>
</comment>
<comment type="similarity">
    <text evidence="1">Belongs to the eIF-1A family.</text>
</comment>
<sequence length="123" mass="14531">MSPDKTEDEDKDVNVDQDQFNEEEESLGRVILPNKKKGEMFGIVEKMEGASRLSVMCEDGYTRNARIPGRMRKRMWIREKDLVIVKPWEFQPEKADVVYRYTKTQASYLSRNHMLPEVIDIFK</sequence>
<reference key="1">
    <citation type="journal article" date="2000" name="Proc. Natl. Acad. Sci. U.S.A.">
        <title>Archaeal adaptation to higher temperatures revealed by genomic sequence of Thermoplasma volcanium.</title>
        <authorList>
            <person name="Kawashima T."/>
            <person name="Amano N."/>
            <person name="Koike H."/>
            <person name="Makino S."/>
            <person name="Higuchi S."/>
            <person name="Kawashima-Ohya Y."/>
            <person name="Watanabe K."/>
            <person name="Yamazaki M."/>
            <person name="Kanehori K."/>
            <person name="Kawamoto T."/>
            <person name="Nunoshiba T."/>
            <person name="Yamamoto Y."/>
            <person name="Aramaki H."/>
            <person name="Makino K."/>
            <person name="Suzuki M."/>
        </authorList>
    </citation>
    <scope>NUCLEOTIDE SEQUENCE [LARGE SCALE GENOMIC DNA]</scope>
    <source>
        <strain>ATCC 51530 / DSM 4299 / JCM 9571 / NBRC 15438 / GSS1</strain>
    </source>
</reference>
<organism>
    <name type="scientific">Thermoplasma volcanium (strain ATCC 51530 / DSM 4299 / JCM 9571 / NBRC 15438 / GSS1)</name>
    <dbReference type="NCBI Taxonomy" id="273116"/>
    <lineage>
        <taxon>Archaea</taxon>
        <taxon>Methanobacteriati</taxon>
        <taxon>Thermoplasmatota</taxon>
        <taxon>Thermoplasmata</taxon>
        <taxon>Thermoplasmatales</taxon>
        <taxon>Thermoplasmataceae</taxon>
        <taxon>Thermoplasma</taxon>
    </lineage>
</organism>
<evidence type="ECO:0000255" key="1">
    <source>
        <dbReference type="HAMAP-Rule" id="MF_00216"/>
    </source>
</evidence>
<evidence type="ECO:0000256" key="2">
    <source>
        <dbReference type="SAM" id="MobiDB-lite"/>
    </source>
</evidence>
<dbReference type="EMBL" id="BA000011">
    <property type="protein sequence ID" value="BAB60346.1"/>
    <property type="molecule type" value="Genomic_DNA"/>
</dbReference>
<dbReference type="RefSeq" id="WP_010917436.1">
    <property type="nucleotide sequence ID" value="NC_002689.2"/>
</dbReference>
<dbReference type="SMR" id="Q979F7"/>
<dbReference type="STRING" id="273116.gene:9382006"/>
<dbReference type="PaxDb" id="273116-14325442"/>
<dbReference type="GeneID" id="1441318"/>
<dbReference type="KEGG" id="tvo:TVG1232812"/>
<dbReference type="eggNOG" id="arCOG01179">
    <property type="taxonomic scope" value="Archaea"/>
</dbReference>
<dbReference type="HOGENOM" id="CLU_109098_1_2_2"/>
<dbReference type="OrthoDB" id="2586at2157"/>
<dbReference type="PhylomeDB" id="Q979F7"/>
<dbReference type="Proteomes" id="UP000001017">
    <property type="component" value="Chromosome"/>
</dbReference>
<dbReference type="GO" id="GO:0003723">
    <property type="term" value="F:RNA binding"/>
    <property type="evidence" value="ECO:0007669"/>
    <property type="project" value="InterPro"/>
</dbReference>
<dbReference type="GO" id="GO:0003743">
    <property type="term" value="F:translation initiation factor activity"/>
    <property type="evidence" value="ECO:0007669"/>
    <property type="project" value="UniProtKB-UniRule"/>
</dbReference>
<dbReference type="CDD" id="cd05793">
    <property type="entry name" value="S1_IF1A"/>
    <property type="match status" value="1"/>
</dbReference>
<dbReference type="Gene3D" id="2.40.50.140">
    <property type="entry name" value="Nucleic acid-binding proteins"/>
    <property type="match status" value="1"/>
</dbReference>
<dbReference type="HAMAP" id="MF_00216">
    <property type="entry name" value="aIF_1A"/>
    <property type="match status" value="1"/>
</dbReference>
<dbReference type="InterPro" id="IPR012340">
    <property type="entry name" value="NA-bd_OB-fold"/>
</dbReference>
<dbReference type="InterPro" id="IPR006196">
    <property type="entry name" value="RNA-binding_domain_S1_IF1"/>
</dbReference>
<dbReference type="InterPro" id="IPR001253">
    <property type="entry name" value="TIF_eIF-1A"/>
</dbReference>
<dbReference type="InterPro" id="IPR018104">
    <property type="entry name" value="TIF_eIF-1A_CS"/>
</dbReference>
<dbReference type="NCBIfam" id="TIGR00523">
    <property type="entry name" value="eIF-1A"/>
    <property type="match status" value="1"/>
</dbReference>
<dbReference type="NCBIfam" id="NF003084">
    <property type="entry name" value="PRK04012.1-3"/>
    <property type="match status" value="1"/>
</dbReference>
<dbReference type="NCBIfam" id="NF003085">
    <property type="entry name" value="PRK04012.1-5"/>
    <property type="match status" value="1"/>
</dbReference>
<dbReference type="PANTHER" id="PTHR21668">
    <property type="entry name" value="EIF-1A"/>
    <property type="match status" value="1"/>
</dbReference>
<dbReference type="Pfam" id="PF01176">
    <property type="entry name" value="eIF-1a"/>
    <property type="match status" value="1"/>
</dbReference>
<dbReference type="SMART" id="SM00652">
    <property type="entry name" value="eIF1a"/>
    <property type="match status" value="1"/>
</dbReference>
<dbReference type="SUPFAM" id="SSF50249">
    <property type="entry name" value="Nucleic acid-binding proteins"/>
    <property type="match status" value="1"/>
</dbReference>
<dbReference type="PROSITE" id="PS01262">
    <property type="entry name" value="IF1A"/>
    <property type="match status" value="1"/>
</dbReference>
<dbReference type="PROSITE" id="PS50832">
    <property type="entry name" value="S1_IF1_TYPE"/>
    <property type="match status" value="1"/>
</dbReference>
<accession>Q979F7</accession>
<keyword id="KW-0396">Initiation factor</keyword>
<keyword id="KW-0648">Protein biosynthesis</keyword>
<feature type="chain" id="PRO_0000145137" description="Translation initiation factor 1A">
    <location>
        <begin position="1"/>
        <end position="123"/>
    </location>
</feature>
<feature type="domain" description="S1-like" evidence="1">
    <location>
        <begin position="28"/>
        <end position="102"/>
    </location>
</feature>
<feature type="region of interest" description="Disordered" evidence="2">
    <location>
        <begin position="1"/>
        <end position="26"/>
    </location>
</feature>
<feature type="compositionally biased region" description="Acidic residues" evidence="2">
    <location>
        <begin position="1"/>
        <end position="11"/>
    </location>
</feature>
<gene>
    <name type="primary">eIF1A</name>
    <name type="ordered locus">TV1204</name>
    <name type="ORF">TVG1232812</name>
</gene>